<comment type="function">
    <text evidence="1">Specifically methylates the N4 position of cytidine in position 1402 (C1402) of 16S rRNA.</text>
</comment>
<comment type="catalytic activity">
    <reaction evidence="1">
        <text>cytidine(1402) in 16S rRNA + S-adenosyl-L-methionine = N(4)-methylcytidine(1402) in 16S rRNA + S-adenosyl-L-homocysteine + H(+)</text>
        <dbReference type="Rhea" id="RHEA:42928"/>
        <dbReference type="Rhea" id="RHEA-COMP:10286"/>
        <dbReference type="Rhea" id="RHEA-COMP:10287"/>
        <dbReference type="ChEBI" id="CHEBI:15378"/>
        <dbReference type="ChEBI" id="CHEBI:57856"/>
        <dbReference type="ChEBI" id="CHEBI:59789"/>
        <dbReference type="ChEBI" id="CHEBI:74506"/>
        <dbReference type="ChEBI" id="CHEBI:82748"/>
        <dbReference type="EC" id="2.1.1.199"/>
    </reaction>
</comment>
<comment type="subcellular location">
    <subcellularLocation>
        <location evidence="1">Cytoplasm</location>
    </subcellularLocation>
</comment>
<comment type="similarity">
    <text evidence="1">Belongs to the methyltransferase superfamily. RsmH family.</text>
</comment>
<reference key="1">
    <citation type="journal article" date="1998" name="DNA Seq.">
        <title>The division and cell wall gene cluster of Enterococcus hirae S185.</title>
        <authorList>
            <person name="Duez C."/>
            <person name="Thamm I."/>
            <person name="Sapunaric F."/>
            <person name="Coyette J."/>
            <person name="Ghuysen J.-M."/>
        </authorList>
    </citation>
    <scope>NUCLEOTIDE SEQUENCE [GENOMIC DNA]</scope>
    <source>
        <strain>S185</strain>
    </source>
</reference>
<protein>
    <recommendedName>
        <fullName evidence="1">Ribosomal RNA small subunit methyltransferase H</fullName>
        <ecNumber evidence="1">2.1.1.199</ecNumber>
    </recommendedName>
    <alternativeName>
        <fullName evidence="1">16S rRNA m(4)C1402 methyltransferase</fullName>
    </alternativeName>
    <alternativeName>
        <fullName evidence="1">rRNA (cytosine-N(4)-)-methyltransferase RsmH</fullName>
    </alternativeName>
</protein>
<evidence type="ECO:0000255" key="1">
    <source>
        <dbReference type="HAMAP-Rule" id="MF_01007"/>
    </source>
</evidence>
<gene>
    <name evidence="1" type="primary">rsmH</name>
    <name type="synonym">mraW</name>
</gene>
<accession>O07665</accession>
<organism>
    <name type="scientific">Enterococcus hirae</name>
    <dbReference type="NCBI Taxonomy" id="1354"/>
    <lineage>
        <taxon>Bacteria</taxon>
        <taxon>Bacillati</taxon>
        <taxon>Bacillota</taxon>
        <taxon>Bacilli</taxon>
        <taxon>Lactobacillales</taxon>
        <taxon>Enterococcaceae</taxon>
        <taxon>Enterococcus</taxon>
    </lineage>
</organism>
<name>RSMH_ENTHR</name>
<proteinExistence type="inferred from homology"/>
<keyword id="KW-0963">Cytoplasm</keyword>
<keyword id="KW-0489">Methyltransferase</keyword>
<keyword id="KW-0698">rRNA processing</keyword>
<keyword id="KW-0949">S-adenosyl-L-methionine</keyword>
<keyword id="KW-0808">Transferase</keyword>
<sequence length="319" mass="36375">MTETFQHYTVMLKETVDGLNIKPDGIYVDCTLGGAGHSEYLLSQLNTNGHLYAFDQDQKAIDHAKVRLAPYIEKGMVTFIKANFRELEAKIKEHVPQVDGILYDLGVSSPQLDEAERGFSYHQDAPLDMRMDQSAPLSAYDVVNEYSYNELVKIFFRYGEEKFSKQIAREIERVRKIHPIQTTGELVEIIKDVIPAPARRKGGHPAKRIFQAIRIAVNDELGAEEASLEQAIRLLKINGRISVITFHSLEDRIVKSMFKEYSTVQDLPPGLPVVPEEFQPELKLINRKPILPSEEELSENNRSRSAKLRIAEKIRVKEE</sequence>
<dbReference type="EC" id="2.1.1.199" evidence="1"/>
<dbReference type="EMBL" id="Y13922">
    <property type="protein sequence ID" value="CAA74239.1"/>
    <property type="molecule type" value="Genomic_DNA"/>
</dbReference>
<dbReference type="RefSeq" id="WP_053766114.1">
    <property type="nucleotide sequence ID" value="NZ_CAKMAQ010000006.1"/>
</dbReference>
<dbReference type="SMR" id="O07665"/>
<dbReference type="STRING" id="1354.A6P53_03380"/>
<dbReference type="GeneID" id="56788113"/>
<dbReference type="GO" id="GO:0005737">
    <property type="term" value="C:cytoplasm"/>
    <property type="evidence" value="ECO:0007669"/>
    <property type="project" value="UniProtKB-SubCell"/>
</dbReference>
<dbReference type="GO" id="GO:0071424">
    <property type="term" value="F:rRNA (cytosine-N4-)-methyltransferase activity"/>
    <property type="evidence" value="ECO:0007669"/>
    <property type="project" value="UniProtKB-UniRule"/>
</dbReference>
<dbReference type="GO" id="GO:0070475">
    <property type="term" value="P:rRNA base methylation"/>
    <property type="evidence" value="ECO:0007669"/>
    <property type="project" value="UniProtKB-UniRule"/>
</dbReference>
<dbReference type="FunFam" id="1.10.150.170:FF:000001">
    <property type="entry name" value="Ribosomal RNA small subunit methyltransferase H"/>
    <property type="match status" value="1"/>
</dbReference>
<dbReference type="Gene3D" id="1.10.150.170">
    <property type="entry name" value="Putative methyltransferase TM0872, insert domain"/>
    <property type="match status" value="1"/>
</dbReference>
<dbReference type="Gene3D" id="3.40.50.150">
    <property type="entry name" value="Vaccinia Virus protein VP39"/>
    <property type="match status" value="1"/>
</dbReference>
<dbReference type="HAMAP" id="MF_01007">
    <property type="entry name" value="16SrRNA_methyltr_H"/>
    <property type="match status" value="1"/>
</dbReference>
<dbReference type="InterPro" id="IPR002903">
    <property type="entry name" value="RsmH"/>
</dbReference>
<dbReference type="InterPro" id="IPR023397">
    <property type="entry name" value="SAM-dep_MeTrfase_MraW_recog"/>
</dbReference>
<dbReference type="InterPro" id="IPR029063">
    <property type="entry name" value="SAM-dependent_MTases_sf"/>
</dbReference>
<dbReference type="NCBIfam" id="TIGR00006">
    <property type="entry name" value="16S rRNA (cytosine(1402)-N(4))-methyltransferase RsmH"/>
    <property type="match status" value="1"/>
</dbReference>
<dbReference type="PANTHER" id="PTHR11265:SF0">
    <property type="entry name" value="12S RRNA N4-METHYLCYTIDINE METHYLTRANSFERASE"/>
    <property type="match status" value="1"/>
</dbReference>
<dbReference type="PANTHER" id="PTHR11265">
    <property type="entry name" value="S-ADENOSYL-METHYLTRANSFERASE MRAW"/>
    <property type="match status" value="1"/>
</dbReference>
<dbReference type="Pfam" id="PF01795">
    <property type="entry name" value="Methyltransf_5"/>
    <property type="match status" value="1"/>
</dbReference>
<dbReference type="PIRSF" id="PIRSF004486">
    <property type="entry name" value="MraW"/>
    <property type="match status" value="1"/>
</dbReference>
<dbReference type="SUPFAM" id="SSF81799">
    <property type="entry name" value="Putative methyltransferase TM0872, insert domain"/>
    <property type="match status" value="1"/>
</dbReference>
<dbReference type="SUPFAM" id="SSF53335">
    <property type="entry name" value="S-adenosyl-L-methionine-dependent methyltransferases"/>
    <property type="match status" value="1"/>
</dbReference>
<feature type="chain" id="PRO_0000108626" description="Ribosomal RNA small subunit methyltransferase H">
    <location>
        <begin position="1"/>
        <end position="319"/>
    </location>
</feature>
<feature type="binding site" evidence="1">
    <location>
        <begin position="35"/>
        <end position="37"/>
    </location>
    <ligand>
        <name>S-adenosyl-L-methionine</name>
        <dbReference type="ChEBI" id="CHEBI:59789"/>
    </ligand>
</feature>
<feature type="binding site" evidence="1">
    <location>
        <position position="55"/>
    </location>
    <ligand>
        <name>S-adenosyl-L-methionine</name>
        <dbReference type="ChEBI" id="CHEBI:59789"/>
    </ligand>
</feature>
<feature type="binding site" evidence="1">
    <location>
        <position position="84"/>
    </location>
    <ligand>
        <name>S-adenosyl-L-methionine</name>
        <dbReference type="ChEBI" id="CHEBI:59789"/>
    </ligand>
</feature>
<feature type="binding site" evidence="1">
    <location>
        <position position="104"/>
    </location>
    <ligand>
        <name>S-adenosyl-L-methionine</name>
        <dbReference type="ChEBI" id="CHEBI:59789"/>
    </ligand>
</feature>
<feature type="binding site" evidence="1">
    <location>
        <position position="111"/>
    </location>
    <ligand>
        <name>S-adenosyl-L-methionine</name>
        <dbReference type="ChEBI" id="CHEBI:59789"/>
    </ligand>
</feature>